<reference key="1">
    <citation type="journal article" date="2002" name="Nature">
        <title>Sequence and analysis of rice chromosome 4.</title>
        <authorList>
            <person name="Feng Q."/>
            <person name="Zhang Y."/>
            <person name="Hao P."/>
            <person name="Wang S."/>
            <person name="Fu G."/>
            <person name="Huang Y."/>
            <person name="Li Y."/>
            <person name="Zhu J."/>
            <person name="Liu Y."/>
            <person name="Hu X."/>
            <person name="Jia P."/>
            <person name="Zhang Y."/>
            <person name="Zhao Q."/>
            <person name="Ying K."/>
            <person name="Yu S."/>
            <person name="Tang Y."/>
            <person name="Weng Q."/>
            <person name="Zhang L."/>
            <person name="Lu Y."/>
            <person name="Mu J."/>
            <person name="Lu Y."/>
            <person name="Zhang L.S."/>
            <person name="Yu Z."/>
            <person name="Fan D."/>
            <person name="Liu X."/>
            <person name="Lu T."/>
            <person name="Li C."/>
            <person name="Wu Y."/>
            <person name="Sun T."/>
            <person name="Lei H."/>
            <person name="Li T."/>
            <person name="Hu H."/>
            <person name="Guan J."/>
            <person name="Wu M."/>
            <person name="Zhang R."/>
            <person name="Zhou B."/>
            <person name="Chen Z."/>
            <person name="Chen L."/>
            <person name="Jin Z."/>
            <person name="Wang R."/>
            <person name="Yin H."/>
            <person name="Cai Z."/>
            <person name="Ren S."/>
            <person name="Lv G."/>
            <person name="Gu W."/>
            <person name="Zhu G."/>
            <person name="Tu Y."/>
            <person name="Jia J."/>
            <person name="Zhang Y."/>
            <person name="Chen J."/>
            <person name="Kang H."/>
            <person name="Chen X."/>
            <person name="Shao C."/>
            <person name="Sun Y."/>
            <person name="Hu Q."/>
            <person name="Zhang X."/>
            <person name="Zhang W."/>
            <person name="Wang L."/>
            <person name="Ding C."/>
            <person name="Sheng H."/>
            <person name="Gu J."/>
            <person name="Chen S."/>
            <person name="Ni L."/>
            <person name="Zhu F."/>
            <person name="Chen W."/>
            <person name="Lan L."/>
            <person name="Lai Y."/>
            <person name="Cheng Z."/>
            <person name="Gu M."/>
            <person name="Jiang J."/>
            <person name="Li J."/>
            <person name="Hong G."/>
            <person name="Xue Y."/>
            <person name="Han B."/>
        </authorList>
    </citation>
    <scope>NUCLEOTIDE SEQUENCE [LARGE SCALE GENOMIC DNA]</scope>
    <source>
        <strain>cv. Nipponbare</strain>
    </source>
</reference>
<reference key="2">
    <citation type="journal article" date="2005" name="Nature">
        <title>The map-based sequence of the rice genome.</title>
        <authorList>
            <consortium name="International rice genome sequencing project (IRGSP)"/>
        </authorList>
    </citation>
    <scope>NUCLEOTIDE SEQUENCE [LARGE SCALE GENOMIC DNA]</scope>
    <source>
        <strain>cv. Nipponbare</strain>
    </source>
</reference>
<reference key="3">
    <citation type="journal article" date="2008" name="Nucleic Acids Res.">
        <title>The rice annotation project database (RAP-DB): 2008 update.</title>
        <authorList>
            <consortium name="The rice annotation project (RAP)"/>
        </authorList>
    </citation>
    <scope>GENOME REANNOTATION</scope>
    <source>
        <strain>cv. Nipponbare</strain>
    </source>
</reference>
<reference key="4">
    <citation type="journal article" date="2013" name="Rice">
        <title>Improvement of the Oryza sativa Nipponbare reference genome using next generation sequence and optical map data.</title>
        <authorList>
            <person name="Kawahara Y."/>
            <person name="de la Bastide M."/>
            <person name="Hamilton J.P."/>
            <person name="Kanamori H."/>
            <person name="McCombie W.R."/>
            <person name="Ouyang S."/>
            <person name="Schwartz D.C."/>
            <person name="Tanaka T."/>
            <person name="Wu J."/>
            <person name="Zhou S."/>
            <person name="Childs K.L."/>
            <person name="Davidson R.M."/>
            <person name="Lin H."/>
            <person name="Quesada-Ocampo L."/>
            <person name="Vaillancourt B."/>
            <person name="Sakai H."/>
            <person name="Lee S.S."/>
            <person name="Kim J."/>
            <person name="Numa H."/>
            <person name="Itoh T."/>
            <person name="Buell C.R."/>
            <person name="Matsumoto T."/>
        </authorList>
    </citation>
    <scope>GENOME REANNOTATION</scope>
    <source>
        <strain>cv. Nipponbare</strain>
    </source>
</reference>
<reference key="5">
    <citation type="journal article" date="2005" name="PLoS Biol.">
        <title>The genomes of Oryza sativa: a history of duplications.</title>
        <authorList>
            <person name="Yu J."/>
            <person name="Wang J."/>
            <person name="Lin W."/>
            <person name="Li S."/>
            <person name="Li H."/>
            <person name="Zhou J."/>
            <person name="Ni P."/>
            <person name="Dong W."/>
            <person name="Hu S."/>
            <person name="Zeng C."/>
            <person name="Zhang J."/>
            <person name="Zhang Y."/>
            <person name="Li R."/>
            <person name="Xu Z."/>
            <person name="Li S."/>
            <person name="Li X."/>
            <person name="Zheng H."/>
            <person name="Cong L."/>
            <person name="Lin L."/>
            <person name="Yin J."/>
            <person name="Geng J."/>
            <person name="Li G."/>
            <person name="Shi J."/>
            <person name="Liu J."/>
            <person name="Lv H."/>
            <person name="Li J."/>
            <person name="Wang J."/>
            <person name="Deng Y."/>
            <person name="Ran L."/>
            <person name="Shi X."/>
            <person name="Wang X."/>
            <person name="Wu Q."/>
            <person name="Li C."/>
            <person name="Ren X."/>
            <person name="Wang J."/>
            <person name="Wang X."/>
            <person name="Li D."/>
            <person name="Liu D."/>
            <person name="Zhang X."/>
            <person name="Ji Z."/>
            <person name="Zhao W."/>
            <person name="Sun Y."/>
            <person name="Zhang Z."/>
            <person name="Bao J."/>
            <person name="Han Y."/>
            <person name="Dong L."/>
            <person name="Ji J."/>
            <person name="Chen P."/>
            <person name="Wu S."/>
            <person name="Liu J."/>
            <person name="Xiao Y."/>
            <person name="Bu D."/>
            <person name="Tan J."/>
            <person name="Yang L."/>
            <person name="Ye C."/>
            <person name="Zhang J."/>
            <person name="Xu J."/>
            <person name="Zhou Y."/>
            <person name="Yu Y."/>
            <person name="Zhang B."/>
            <person name="Zhuang S."/>
            <person name="Wei H."/>
            <person name="Liu B."/>
            <person name="Lei M."/>
            <person name="Yu H."/>
            <person name="Li Y."/>
            <person name="Xu H."/>
            <person name="Wei S."/>
            <person name="He X."/>
            <person name="Fang L."/>
            <person name="Zhang Z."/>
            <person name="Zhang Y."/>
            <person name="Huang X."/>
            <person name="Su Z."/>
            <person name="Tong W."/>
            <person name="Li J."/>
            <person name="Tong Z."/>
            <person name="Li S."/>
            <person name="Ye J."/>
            <person name="Wang L."/>
            <person name="Fang L."/>
            <person name="Lei T."/>
            <person name="Chen C.-S."/>
            <person name="Chen H.-C."/>
            <person name="Xu Z."/>
            <person name="Li H."/>
            <person name="Huang H."/>
            <person name="Zhang F."/>
            <person name="Xu H."/>
            <person name="Li N."/>
            <person name="Zhao C."/>
            <person name="Li S."/>
            <person name="Dong L."/>
            <person name="Huang Y."/>
            <person name="Li L."/>
            <person name="Xi Y."/>
            <person name="Qi Q."/>
            <person name="Li W."/>
            <person name="Zhang B."/>
            <person name="Hu W."/>
            <person name="Zhang Y."/>
            <person name="Tian X."/>
            <person name="Jiao Y."/>
            <person name="Liang X."/>
            <person name="Jin J."/>
            <person name="Gao L."/>
            <person name="Zheng W."/>
            <person name="Hao B."/>
            <person name="Liu S.-M."/>
            <person name="Wang W."/>
            <person name="Yuan L."/>
            <person name="Cao M."/>
            <person name="McDermott J."/>
            <person name="Samudrala R."/>
            <person name="Wang J."/>
            <person name="Wong G.K.-S."/>
            <person name="Yang H."/>
        </authorList>
    </citation>
    <scope>NUCLEOTIDE SEQUENCE [LARGE SCALE GENOMIC DNA]</scope>
    <source>
        <strain>cv. Nipponbare</strain>
    </source>
</reference>
<reference key="6">
    <citation type="journal article" date="2014" name="Plant Physiol.">
        <title>Functional and evolutionary analysis of the CASPARIAN STRIP MEMBRANE DOMAIN PROTEIN family.</title>
        <authorList>
            <person name="Roppolo D."/>
            <person name="Boeckmann B."/>
            <person name="Pfister A."/>
            <person name="Boutet E."/>
            <person name="Rubio M.C."/>
            <person name="Denervaud-Tendon V."/>
            <person name="Vermeer J.E."/>
            <person name="Gheyselinck J."/>
            <person name="Xenarios I."/>
            <person name="Geldner N."/>
        </authorList>
    </citation>
    <scope>GENE FAMILY</scope>
    <scope>NOMENCLATURE</scope>
</reference>
<comment type="function">
    <text evidence="1">Regulates membrane-cell wall junctions and localized cell wall deposition. Required for establishment of the Casparian strip membrane domain (CSD) and the subsequent formation of Casparian strips, a cell wall modification of the root endodermis that determines an apoplastic barrier between the intraorganismal apoplasm and the extraorganismal apoplasm and prevents lateral diffusion (By similarity).</text>
</comment>
<comment type="subunit">
    <text evidence="1">Homodimer and heterodimers.</text>
</comment>
<comment type="subcellular location">
    <subcellularLocation>
        <location evidence="1">Cell membrane</location>
        <topology evidence="1">Multi-pass membrane protein</topology>
    </subcellularLocation>
    <text evidence="1">Very restricted localization following a belt shape within the plasma membrane which coincides with the position of the Casparian strip membrane domain in the root endodermis.</text>
</comment>
<comment type="similarity">
    <text evidence="3">Belongs to the Casparian strip membrane proteins (CASP) family.</text>
</comment>
<organism>
    <name type="scientific">Oryza sativa subsp. japonica</name>
    <name type="common">Rice</name>
    <dbReference type="NCBI Taxonomy" id="39947"/>
    <lineage>
        <taxon>Eukaryota</taxon>
        <taxon>Viridiplantae</taxon>
        <taxon>Streptophyta</taxon>
        <taxon>Embryophyta</taxon>
        <taxon>Tracheophyta</taxon>
        <taxon>Spermatophyta</taxon>
        <taxon>Magnoliopsida</taxon>
        <taxon>Liliopsida</taxon>
        <taxon>Poales</taxon>
        <taxon>Poaceae</taxon>
        <taxon>BOP clade</taxon>
        <taxon>Oryzoideae</taxon>
        <taxon>Oryzeae</taxon>
        <taxon>Oryzinae</taxon>
        <taxon>Oryza</taxon>
        <taxon>Oryza sativa</taxon>
    </lineage>
</organism>
<protein>
    <recommendedName>
        <fullName>Casparian strip membrane protein 5</fullName>
        <shortName>OsCASP5</shortName>
    </recommendedName>
</protein>
<name>CASP5_ORYSJ</name>
<dbReference type="EMBL" id="AL606460">
    <property type="protein sequence ID" value="CAD40983.2"/>
    <property type="molecule type" value="Genomic_DNA"/>
</dbReference>
<dbReference type="EMBL" id="AP008210">
    <property type="protein sequence ID" value="BAF14904.2"/>
    <property type="molecule type" value="Genomic_DNA"/>
</dbReference>
<dbReference type="EMBL" id="AP014960">
    <property type="status" value="NOT_ANNOTATED_CDS"/>
    <property type="molecule type" value="Genomic_DNA"/>
</dbReference>
<dbReference type="EMBL" id="CM000141">
    <property type="protein sequence ID" value="EAZ30975.1"/>
    <property type="molecule type" value="Genomic_DNA"/>
</dbReference>
<dbReference type="SMR" id="Q7XUV7"/>
<dbReference type="FunCoup" id="Q7XUV7">
    <property type="interactions" value="1037"/>
</dbReference>
<dbReference type="PaxDb" id="39947-Q7XUV7"/>
<dbReference type="KEGG" id="dosa:Os04g0460400"/>
<dbReference type="eggNOG" id="ENOG502RRQU">
    <property type="taxonomic scope" value="Eukaryota"/>
</dbReference>
<dbReference type="HOGENOM" id="CLU_066104_3_2_1"/>
<dbReference type="InParanoid" id="Q7XUV7"/>
<dbReference type="Proteomes" id="UP000000763">
    <property type="component" value="Chromosome 4"/>
</dbReference>
<dbReference type="Proteomes" id="UP000007752">
    <property type="component" value="Chromosome 4"/>
</dbReference>
<dbReference type="Proteomes" id="UP000059680">
    <property type="component" value="Chromosome 4"/>
</dbReference>
<dbReference type="GO" id="GO:0005886">
    <property type="term" value="C:plasma membrane"/>
    <property type="evidence" value="ECO:0000318"/>
    <property type="project" value="GO_Central"/>
</dbReference>
<dbReference type="GO" id="GO:0071555">
    <property type="term" value="P:cell wall organization"/>
    <property type="evidence" value="ECO:0007669"/>
    <property type="project" value="UniProtKB-KW"/>
</dbReference>
<dbReference type="InterPro" id="IPR006459">
    <property type="entry name" value="CASP/CASPL"/>
</dbReference>
<dbReference type="InterPro" id="IPR006702">
    <property type="entry name" value="CASP_dom"/>
</dbReference>
<dbReference type="InterPro" id="IPR044173">
    <property type="entry name" value="CASPL"/>
</dbReference>
<dbReference type="NCBIfam" id="TIGR01569">
    <property type="entry name" value="A_tha_TIGR01569"/>
    <property type="match status" value="1"/>
</dbReference>
<dbReference type="PANTHER" id="PTHR36488:SF12">
    <property type="entry name" value="CASP-LIKE PROTEIN"/>
    <property type="match status" value="1"/>
</dbReference>
<dbReference type="PANTHER" id="PTHR36488">
    <property type="entry name" value="CASP-LIKE PROTEIN 1U1"/>
    <property type="match status" value="1"/>
</dbReference>
<dbReference type="Pfam" id="PF04535">
    <property type="entry name" value="CASP_dom"/>
    <property type="match status" value="1"/>
</dbReference>
<evidence type="ECO:0000250" key="1"/>
<evidence type="ECO:0000255" key="2"/>
<evidence type="ECO:0000305" key="3"/>
<gene>
    <name type="ordered locus">Os04g0460400</name>
    <name type="ordered locus">LOC_Os04g38690</name>
    <name type="ORF">OsJ_014458</name>
    <name type="ORF">OSJNBa0072F16.8</name>
</gene>
<keyword id="KW-1003">Cell membrane</keyword>
<keyword id="KW-0961">Cell wall biogenesis/degradation</keyword>
<keyword id="KW-0325">Glycoprotein</keyword>
<keyword id="KW-0472">Membrane</keyword>
<keyword id="KW-1185">Reference proteome</keyword>
<keyword id="KW-0812">Transmembrane</keyword>
<keyword id="KW-1133">Transmembrane helix</keyword>
<sequence length="186" mass="20099">MEHGEISSKAPLVAPVAAGVNRAVAVVDTFLRFIAIIGTIGSAIAMGTTNETLPFFTQFIQFEAKYSDLPSFTFFVAANAVVCTYLVLSIPLSIVHILRPRARYSRLFLVFFDTAMLALLTAGASAAAAIVYLAHKGNVRANWFSICQQFDSFCERISGSLIGSFAAMVLLVVLITLSAFALARRH</sequence>
<proteinExistence type="inferred from homology"/>
<accession>Q7XUV7</accession>
<accession>Q0JCN3</accession>
<feature type="chain" id="PRO_0000370285" description="Casparian strip membrane protein 5">
    <location>
        <begin position="1"/>
        <end position="186"/>
    </location>
</feature>
<feature type="topological domain" description="Cytoplasmic" evidence="2">
    <location>
        <begin position="1"/>
        <end position="23"/>
    </location>
</feature>
<feature type="transmembrane region" description="Helical" evidence="2">
    <location>
        <begin position="24"/>
        <end position="44"/>
    </location>
</feature>
<feature type="topological domain" description="Extracellular" evidence="2">
    <location>
        <begin position="45"/>
        <end position="73"/>
    </location>
</feature>
<feature type="transmembrane region" description="Helical" evidence="2">
    <location>
        <begin position="74"/>
        <end position="94"/>
    </location>
</feature>
<feature type="topological domain" description="Cytoplasmic" evidence="2">
    <location>
        <begin position="95"/>
        <end position="106"/>
    </location>
</feature>
<feature type="transmembrane region" description="Helical" evidence="2">
    <location>
        <begin position="107"/>
        <end position="127"/>
    </location>
</feature>
<feature type="topological domain" description="Extracellular" evidence="2">
    <location>
        <begin position="128"/>
        <end position="160"/>
    </location>
</feature>
<feature type="transmembrane region" description="Helical" evidence="2">
    <location>
        <begin position="161"/>
        <end position="181"/>
    </location>
</feature>
<feature type="topological domain" description="Cytoplasmic" evidence="2">
    <location>
        <begin position="182"/>
        <end position="186"/>
    </location>
</feature>
<feature type="glycosylation site" description="N-linked (GlcNAc...) asparagine" evidence="2">
    <location>
        <position position="50"/>
    </location>
</feature>